<proteinExistence type="inferred from homology"/>
<gene>
    <name evidence="1" type="primary">murE</name>
    <name type="ordered locus">gll3492</name>
</gene>
<feature type="chain" id="PRO_0000101898" description="UDP-N-acetylmuramoyl-L-alanyl-D-glutamate--2,6-diaminopimelate ligase">
    <location>
        <begin position="1"/>
        <end position="489"/>
    </location>
</feature>
<feature type="short sequence motif" description="Meso-diaminopimelate recognition motif">
    <location>
        <begin position="405"/>
        <end position="408"/>
    </location>
</feature>
<feature type="binding site" evidence="1">
    <location>
        <position position="32"/>
    </location>
    <ligand>
        <name>UDP-N-acetyl-alpha-D-muramoyl-L-alanyl-D-glutamate</name>
        <dbReference type="ChEBI" id="CHEBI:83900"/>
    </ligand>
</feature>
<feature type="binding site" evidence="1">
    <location>
        <begin position="113"/>
        <end position="119"/>
    </location>
    <ligand>
        <name>ATP</name>
        <dbReference type="ChEBI" id="CHEBI:30616"/>
    </ligand>
</feature>
<feature type="binding site" evidence="1">
    <location>
        <begin position="154"/>
        <end position="155"/>
    </location>
    <ligand>
        <name>UDP-N-acetyl-alpha-D-muramoyl-L-alanyl-D-glutamate</name>
        <dbReference type="ChEBI" id="CHEBI:83900"/>
    </ligand>
</feature>
<feature type="binding site" evidence="1">
    <location>
        <position position="181"/>
    </location>
    <ligand>
        <name>UDP-N-acetyl-alpha-D-muramoyl-L-alanyl-D-glutamate</name>
        <dbReference type="ChEBI" id="CHEBI:83900"/>
    </ligand>
</feature>
<feature type="binding site" evidence="1">
    <location>
        <position position="187"/>
    </location>
    <ligand>
        <name>UDP-N-acetyl-alpha-D-muramoyl-L-alanyl-D-glutamate</name>
        <dbReference type="ChEBI" id="CHEBI:83900"/>
    </ligand>
</feature>
<feature type="binding site" evidence="1">
    <location>
        <position position="189"/>
    </location>
    <ligand>
        <name>UDP-N-acetyl-alpha-D-muramoyl-L-alanyl-D-glutamate</name>
        <dbReference type="ChEBI" id="CHEBI:83900"/>
    </ligand>
</feature>
<feature type="binding site" evidence="1">
    <location>
        <position position="381"/>
    </location>
    <ligand>
        <name>meso-2,6-diaminopimelate</name>
        <dbReference type="ChEBI" id="CHEBI:57791"/>
    </ligand>
</feature>
<feature type="binding site" evidence="1">
    <location>
        <begin position="405"/>
        <end position="408"/>
    </location>
    <ligand>
        <name>meso-2,6-diaminopimelate</name>
        <dbReference type="ChEBI" id="CHEBI:57791"/>
    </ligand>
</feature>
<feature type="binding site" evidence="1">
    <location>
        <position position="456"/>
    </location>
    <ligand>
        <name>meso-2,6-diaminopimelate</name>
        <dbReference type="ChEBI" id="CHEBI:57791"/>
    </ligand>
</feature>
<feature type="binding site" evidence="1">
    <location>
        <position position="460"/>
    </location>
    <ligand>
        <name>meso-2,6-diaminopimelate</name>
        <dbReference type="ChEBI" id="CHEBI:57791"/>
    </ligand>
</feature>
<feature type="modified residue" description="N6-carboxylysine" evidence="1">
    <location>
        <position position="221"/>
    </location>
</feature>
<keyword id="KW-0067">ATP-binding</keyword>
<keyword id="KW-0131">Cell cycle</keyword>
<keyword id="KW-0132">Cell division</keyword>
<keyword id="KW-0133">Cell shape</keyword>
<keyword id="KW-0961">Cell wall biogenesis/degradation</keyword>
<keyword id="KW-0963">Cytoplasm</keyword>
<keyword id="KW-0436">Ligase</keyword>
<keyword id="KW-0460">Magnesium</keyword>
<keyword id="KW-0547">Nucleotide-binding</keyword>
<keyword id="KW-0573">Peptidoglycan synthesis</keyword>
<keyword id="KW-1185">Reference proteome</keyword>
<sequence length="489" mass="52454">MPAMRLHELLARTGLDTRNLPDIDIAGLSTDSRQVQPGDLFIGLPGTRVDGSEFWPQAIAGGAAGLVISENARGVEAAVPVIRVPDVVGTCARLASAYYDFPARKLTLAGVTGTNGKTTTTHLIENLLQAQAPTGLVGTLYSRWPGQSQEARHTTPFALEIQKLLAQMVEAGCQYGVMEVSSHALAQQRVAGCRFEAAVFTNLTQDHLDFHPDMESYFQAKATLFSPEYRSGRAVINADDPWGVRLAAAYDQVWTYSFQPGADIYPEDAVFTPEGIRGTLVTPVGRAAFTSPLVGQFNLANLLAAVGATLALGIDLEAIAAGLSGFGGVPGRMERVSGSDDDIAVIVDYAHTPDGLRKLLEATRPFVRGRLICVFGCGGDRDRTKRPQMGRIAAELSDLPVVTSDNPRTENPEAILDDILAGIPVGVSPTVEVDRRRAILQALLEAKAGDCVVIAGKGHEDYQILGTTKIHFDDREQAREALSKRRSRG</sequence>
<dbReference type="EC" id="6.3.2.13" evidence="1"/>
<dbReference type="EMBL" id="BA000045">
    <property type="protein sequence ID" value="BAC91433.1"/>
    <property type="molecule type" value="Genomic_DNA"/>
</dbReference>
<dbReference type="RefSeq" id="NP_926438.1">
    <property type="nucleotide sequence ID" value="NC_005125.1"/>
</dbReference>
<dbReference type="SMR" id="Q7NFN2"/>
<dbReference type="FunCoup" id="Q7NFN2">
    <property type="interactions" value="268"/>
</dbReference>
<dbReference type="STRING" id="251221.gene:10761004"/>
<dbReference type="EnsemblBacteria" id="BAC91433">
    <property type="protein sequence ID" value="BAC91433"/>
    <property type="gene ID" value="BAC91433"/>
</dbReference>
<dbReference type="KEGG" id="gvi:gll3492"/>
<dbReference type="PATRIC" id="fig|251221.4.peg.3526"/>
<dbReference type="eggNOG" id="COG0769">
    <property type="taxonomic scope" value="Bacteria"/>
</dbReference>
<dbReference type="HOGENOM" id="CLU_022291_4_1_3"/>
<dbReference type="InParanoid" id="Q7NFN2"/>
<dbReference type="OrthoDB" id="9800958at2"/>
<dbReference type="PhylomeDB" id="Q7NFN2"/>
<dbReference type="UniPathway" id="UPA00219"/>
<dbReference type="Proteomes" id="UP000000557">
    <property type="component" value="Chromosome"/>
</dbReference>
<dbReference type="GO" id="GO:0005737">
    <property type="term" value="C:cytoplasm"/>
    <property type="evidence" value="ECO:0007669"/>
    <property type="project" value="UniProtKB-SubCell"/>
</dbReference>
<dbReference type="GO" id="GO:0005524">
    <property type="term" value="F:ATP binding"/>
    <property type="evidence" value="ECO:0007669"/>
    <property type="project" value="UniProtKB-UniRule"/>
</dbReference>
<dbReference type="GO" id="GO:0000287">
    <property type="term" value="F:magnesium ion binding"/>
    <property type="evidence" value="ECO:0007669"/>
    <property type="project" value="UniProtKB-UniRule"/>
</dbReference>
<dbReference type="GO" id="GO:0008765">
    <property type="term" value="F:UDP-N-acetylmuramoylalanyl-D-glutamate-2,6-diaminopimelate ligase activity"/>
    <property type="evidence" value="ECO:0007669"/>
    <property type="project" value="UniProtKB-UniRule"/>
</dbReference>
<dbReference type="GO" id="GO:0051301">
    <property type="term" value="P:cell division"/>
    <property type="evidence" value="ECO:0007669"/>
    <property type="project" value="UniProtKB-KW"/>
</dbReference>
<dbReference type="GO" id="GO:0071555">
    <property type="term" value="P:cell wall organization"/>
    <property type="evidence" value="ECO:0007669"/>
    <property type="project" value="UniProtKB-KW"/>
</dbReference>
<dbReference type="GO" id="GO:0009252">
    <property type="term" value="P:peptidoglycan biosynthetic process"/>
    <property type="evidence" value="ECO:0007669"/>
    <property type="project" value="UniProtKB-UniRule"/>
</dbReference>
<dbReference type="GO" id="GO:0008360">
    <property type="term" value="P:regulation of cell shape"/>
    <property type="evidence" value="ECO:0007669"/>
    <property type="project" value="UniProtKB-KW"/>
</dbReference>
<dbReference type="FunFam" id="3.90.190.20:FF:000006">
    <property type="entry name" value="UDP-N-acetylmuramoyl-L-alanyl-D-glutamate--2,6-diaminopimelate ligase"/>
    <property type="match status" value="1"/>
</dbReference>
<dbReference type="Gene3D" id="3.90.190.20">
    <property type="entry name" value="Mur ligase, C-terminal domain"/>
    <property type="match status" value="1"/>
</dbReference>
<dbReference type="Gene3D" id="3.40.1190.10">
    <property type="entry name" value="Mur-like, catalytic domain"/>
    <property type="match status" value="1"/>
</dbReference>
<dbReference type="Gene3D" id="3.40.1390.10">
    <property type="entry name" value="MurE/MurF, N-terminal domain"/>
    <property type="match status" value="1"/>
</dbReference>
<dbReference type="HAMAP" id="MF_00208">
    <property type="entry name" value="MurE"/>
    <property type="match status" value="1"/>
</dbReference>
<dbReference type="InterPro" id="IPR036565">
    <property type="entry name" value="Mur-like_cat_sf"/>
</dbReference>
<dbReference type="InterPro" id="IPR004101">
    <property type="entry name" value="Mur_ligase_C"/>
</dbReference>
<dbReference type="InterPro" id="IPR036615">
    <property type="entry name" value="Mur_ligase_C_dom_sf"/>
</dbReference>
<dbReference type="InterPro" id="IPR013221">
    <property type="entry name" value="Mur_ligase_cen"/>
</dbReference>
<dbReference type="InterPro" id="IPR000713">
    <property type="entry name" value="Mur_ligase_N"/>
</dbReference>
<dbReference type="InterPro" id="IPR035911">
    <property type="entry name" value="MurE/MurF_N"/>
</dbReference>
<dbReference type="InterPro" id="IPR005761">
    <property type="entry name" value="UDP-N-AcMur-Glu-dNH2Pim_ligase"/>
</dbReference>
<dbReference type="NCBIfam" id="TIGR01085">
    <property type="entry name" value="murE"/>
    <property type="match status" value="1"/>
</dbReference>
<dbReference type="NCBIfam" id="NF001124">
    <property type="entry name" value="PRK00139.1-2"/>
    <property type="match status" value="1"/>
</dbReference>
<dbReference type="NCBIfam" id="NF001126">
    <property type="entry name" value="PRK00139.1-4"/>
    <property type="match status" value="1"/>
</dbReference>
<dbReference type="PANTHER" id="PTHR23135">
    <property type="entry name" value="MUR LIGASE FAMILY MEMBER"/>
    <property type="match status" value="1"/>
</dbReference>
<dbReference type="PANTHER" id="PTHR23135:SF4">
    <property type="entry name" value="UDP-N-ACETYLMURAMOYL-L-ALANYL-D-GLUTAMATE--2,6-DIAMINOPIMELATE LIGASE MURE HOMOLOG, CHLOROPLASTIC"/>
    <property type="match status" value="1"/>
</dbReference>
<dbReference type="Pfam" id="PF01225">
    <property type="entry name" value="Mur_ligase"/>
    <property type="match status" value="1"/>
</dbReference>
<dbReference type="Pfam" id="PF02875">
    <property type="entry name" value="Mur_ligase_C"/>
    <property type="match status" value="1"/>
</dbReference>
<dbReference type="Pfam" id="PF08245">
    <property type="entry name" value="Mur_ligase_M"/>
    <property type="match status" value="1"/>
</dbReference>
<dbReference type="SUPFAM" id="SSF53623">
    <property type="entry name" value="MurD-like peptide ligases, catalytic domain"/>
    <property type="match status" value="1"/>
</dbReference>
<dbReference type="SUPFAM" id="SSF53244">
    <property type="entry name" value="MurD-like peptide ligases, peptide-binding domain"/>
    <property type="match status" value="1"/>
</dbReference>
<dbReference type="SUPFAM" id="SSF63418">
    <property type="entry name" value="MurE/MurF N-terminal domain"/>
    <property type="match status" value="1"/>
</dbReference>
<comment type="function">
    <text evidence="1">Catalyzes the addition of meso-diaminopimelic acid to the nucleotide precursor UDP-N-acetylmuramoyl-L-alanyl-D-glutamate (UMAG) in the biosynthesis of bacterial cell-wall peptidoglycan.</text>
</comment>
<comment type="catalytic activity">
    <reaction evidence="1">
        <text>UDP-N-acetyl-alpha-D-muramoyl-L-alanyl-D-glutamate + meso-2,6-diaminopimelate + ATP = UDP-N-acetyl-alpha-D-muramoyl-L-alanyl-gamma-D-glutamyl-meso-2,6-diaminopimelate + ADP + phosphate + H(+)</text>
        <dbReference type="Rhea" id="RHEA:23676"/>
        <dbReference type="ChEBI" id="CHEBI:15378"/>
        <dbReference type="ChEBI" id="CHEBI:30616"/>
        <dbReference type="ChEBI" id="CHEBI:43474"/>
        <dbReference type="ChEBI" id="CHEBI:57791"/>
        <dbReference type="ChEBI" id="CHEBI:83900"/>
        <dbReference type="ChEBI" id="CHEBI:83905"/>
        <dbReference type="ChEBI" id="CHEBI:456216"/>
        <dbReference type="EC" id="6.3.2.13"/>
    </reaction>
</comment>
<comment type="cofactor">
    <cofactor evidence="1">
        <name>Mg(2+)</name>
        <dbReference type="ChEBI" id="CHEBI:18420"/>
    </cofactor>
</comment>
<comment type="pathway">
    <text evidence="1">Cell wall biogenesis; peptidoglycan biosynthesis.</text>
</comment>
<comment type="subcellular location">
    <subcellularLocation>
        <location evidence="1">Cytoplasm</location>
    </subcellularLocation>
</comment>
<comment type="PTM">
    <text evidence="1">Carboxylation is probably crucial for Mg(2+) binding and, consequently, for the gamma-phosphate positioning of ATP.</text>
</comment>
<comment type="similarity">
    <text evidence="1">Belongs to the MurCDEF family. MurE subfamily.</text>
</comment>
<reference key="1">
    <citation type="journal article" date="2003" name="DNA Res.">
        <title>Complete genome structure of Gloeobacter violaceus PCC 7421, a cyanobacterium that lacks thylakoids.</title>
        <authorList>
            <person name="Nakamura Y."/>
            <person name="Kaneko T."/>
            <person name="Sato S."/>
            <person name="Mimuro M."/>
            <person name="Miyashita H."/>
            <person name="Tsuchiya T."/>
            <person name="Sasamoto S."/>
            <person name="Watanabe A."/>
            <person name="Kawashima K."/>
            <person name="Kishida Y."/>
            <person name="Kiyokawa C."/>
            <person name="Kohara M."/>
            <person name="Matsumoto M."/>
            <person name="Matsuno A."/>
            <person name="Nakazaki N."/>
            <person name="Shimpo S."/>
            <person name="Takeuchi C."/>
            <person name="Yamada M."/>
            <person name="Tabata S."/>
        </authorList>
    </citation>
    <scope>NUCLEOTIDE SEQUENCE [LARGE SCALE GENOMIC DNA]</scope>
    <source>
        <strain>ATCC 29082 / PCC 7421</strain>
    </source>
</reference>
<protein>
    <recommendedName>
        <fullName evidence="1">UDP-N-acetylmuramoyl-L-alanyl-D-glutamate--2,6-diaminopimelate ligase</fullName>
        <ecNumber evidence="1">6.3.2.13</ecNumber>
    </recommendedName>
    <alternativeName>
        <fullName evidence="1">Meso-A2pm-adding enzyme</fullName>
    </alternativeName>
    <alternativeName>
        <fullName evidence="1">Meso-diaminopimelate-adding enzyme</fullName>
    </alternativeName>
    <alternativeName>
        <fullName evidence="1">UDP-MurNAc-L-Ala-D-Glu:meso-diaminopimelate ligase</fullName>
    </alternativeName>
    <alternativeName>
        <fullName evidence="1">UDP-MurNAc-tripeptide synthetase</fullName>
    </alternativeName>
    <alternativeName>
        <fullName evidence="1">UDP-N-acetylmuramyl-tripeptide synthetase</fullName>
    </alternativeName>
</protein>
<accession>Q7NFN2</accession>
<organism>
    <name type="scientific">Gloeobacter violaceus (strain ATCC 29082 / PCC 7421)</name>
    <dbReference type="NCBI Taxonomy" id="251221"/>
    <lineage>
        <taxon>Bacteria</taxon>
        <taxon>Bacillati</taxon>
        <taxon>Cyanobacteriota</taxon>
        <taxon>Cyanophyceae</taxon>
        <taxon>Gloeobacterales</taxon>
        <taxon>Gloeobacteraceae</taxon>
        <taxon>Gloeobacter</taxon>
    </lineage>
</organism>
<evidence type="ECO:0000255" key="1">
    <source>
        <dbReference type="HAMAP-Rule" id="MF_00208"/>
    </source>
</evidence>
<name>MURE_GLOVI</name>